<accession>Q6L1B5</accession>
<sequence>MITKTKIMMAPRKLKIARKSRFWAVNSLPGSHKKDSSIPLLIALRDYLKLGDKEREITRILTNSLVMVDGKVVKERRRGIGFMDTLTVSGNDYLVSYDRKGKLVILPKPGETKGLKLLRVKGKTYVKGGRIQISFHDGSTMVTDRKDIKNGDSVLVKIPKKEIVDVLKFAPGNRVFITGGSHVGEIATIKSIEIKSSSGENMVHMNEGFSTVSSYVFVMGSPKYTFSMPEAIAE</sequence>
<organism>
    <name type="scientific">Picrophilus torridus (strain ATCC 700027 / DSM 9790 / JCM 10055 / NBRC 100828 / KAW 2/3)</name>
    <dbReference type="NCBI Taxonomy" id="1122961"/>
    <lineage>
        <taxon>Archaea</taxon>
        <taxon>Methanobacteriati</taxon>
        <taxon>Thermoplasmatota</taxon>
        <taxon>Thermoplasmata</taxon>
        <taxon>Thermoplasmatales</taxon>
        <taxon>Picrophilaceae</taxon>
        <taxon>Picrophilus</taxon>
    </lineage>
</organism>
<comment type="similarity">
    <text evidence="1">Belongs to the eukaryotic ribosomal protein eS4 family.</text>
</comment>
<evidence type="ECO:0000305" key="1"/>
<dbReference type="EMBL" id="AE017261">
    <property type="protein sequence ID" value="AAT43237.1"/>
    <property type="molecule type" value="Genomic_DNA"/>
</dbReference>
<dbReference type="RefSeq" id="WP_011177453.1">
    <property type="nucleotide sequence ID" value="NC_005877.1"/>
</dbReference>
<dbReference type="SMR" id="Q6L1B5"/>
<dbReference type="FunCoup" id="Q6L1B5">
    <property type="interactions" value="139"/>
</dbReference>
<dbReference type="STRING" id="263820.PTO0652"/>
<dbReference type="PaxDb" id="263820-PTO0652"/>
<dbReference type="GeneID" id="2844319"/>
<dbReference type="KEGG" id="pto:PTO0652"/>
<dbReference type="eggNOG" id="arCOG04093">
    <property type="taxonomic scope" value="Archaea"/>
</dbReference>
<dbReference type="HOGENOM" id="CLU_060400_0_0_2"/>
<dbReference type="InParanoid" id="Q6L1B5"/>
<dbReference type="OrthoDB" id="372073at2157"/>
<dbReference type="Proteomes" id="UP000000438">
    <property type="component" value="Chromosome"/>
</dbReference>
<dbReference type="GO" id="GO:0022627">
    <property type="term" value="C:cytosolic small ribosomal subunit"/>
    <property type="evidence" value="ECO:0007669"/>
    <property type="project" value="TreeGrafter"/>
</dbReference>
<dbReference type="GO" id="GO:0019843">
    <property type="term" value="F:rRNA binding"/>
    <property type="evidence" value="ECO:0007669"/>
    <property type="project" value="UniProtKB-KW"/>
</dbReference>
<dbReference type="GO" id="GO:0003735">
    <property type="term" value="F:structural constituent of ribosome"/>
    <property type="evidence" value="ECO:0007669"/>
    <property type="project" value="InterPro"/>
</dbReference>
<dbReference type="GO" id="GO:0006412">
    <property type="term" value="P:translation"/>
    <property type="evidence" value="ECO:0007669"/>
    <property type="project" value="UniProtKB-UniRule"/>
</dbReference>
<dbReference type="CDD" id="cd06087">
    <property type="entry name" value="KOW_RPS4"/>
    <property type="match status" value="1"/>
</dbReference>
<dbReference type="Gene3D" id="2.30.30.30">
    <property type="match status" value="1"/>
</dbReference>
<dbReference type="Gene3D" id="2.40.50.740">
    <property type="match status" value="1"/>
</dbReference>
<dbReference type="Gene3D" id="3.10.290.10">
    <property type="entry name" value="RNA-binding S4 domain"/>
    <property type="match status" value="1"/>
</dbReference>
<dbReference type="HAMAP" id="MF_00485">
    <property type="entry name" value="Ribosomal_eS4"/>
    <property type="match status" value="1"/>
</dbReference>
<dbReference type="InterPro" id="IPR005824">
    <property type="entry name" value="KOW"/>
</dbReference>
<dbReference type="InterPro" id="IPR014722">
    <property type="entry name" value="Rib_uL2_dom2"/>
</dbReference>
<dbReference type="InterPro" id="IPR000876">
    <property type="entry name" value="Ribosomal_eS4"/>
</dbReference>
<dbReference type="InterPro" id="IPR013845">
    <property type="entry name" value="Ribosomal_eS4_central_region"/>
</dbReference>
<dbReference type="InterPro" id="IPR038237">
    <property type="entry name" value="Ribosomal_eS4_central_sf"/>
</dbReference>
<dbReference type="InterPro" id="IPR041982">
    <property type="entry name" value="Ribosomal_eS4_KOW"/>
</dbReference>
<dbReference type="InterPro" id="IPR036986">
    <property type="entry name" value="S4_RNA-bd_sf"/>
</dbReference>
<dbReference type="NCBIfam" id="NF003312">
    <property type="entry name" value="PRK04313.1"/>
    <property type="match status" value="1"/>
</dbReference>
<dbReference type="PANTHER" id="PTHR11581">
    <property type="entry name" value="30S/40S RIBOSOMAL PROTEIN S4"/>
    <property type="match status" value="1"/>
</dbReference>
<dbReference type="PANTHER" id="PTHR11581:SF0">
    <property type="entry name" value="SMALL RIBOSOMAL SUBUNIT PROTEIN ES4"/>
    <property type="match status" value="1"/>
</dbReference>
<dbReference type="Pfam" id="PF00900">
    <property type="entry name" value="Ribosomal_S4e"/>
    <property type="match status" value="1"/>
</dbReference>
<dbReference type="PIRSF" id="PIRSF002116">
    <property type="entry name" value="Ribosomal_S4"/>
    <property type="match status" value="1"/>
</dbReference>
<dbReference type="SMART" id="SM00739">
    <property type="entry name" value="KOW"/>
    <property type="match status" value="1"/>
</dbReference>
<dbReference type="SUPFAM" id="SSF55174">
    <property type="entry name" value="Alpha-L RNA-binding motif"/>
    <property type="match status" value="1"/>
</dbReference>
<reference key="1">
    <citation type="journal article" date="2004" name="Proc. Natl. Acad. Sci. U.S.A.">
        <title>Genome sequence of Picrophilus torridus and its implications for life around pH 0.</title>
        <authorList>
            <person name="Fuetterer O."/>
            <person name="Angelov A."/>
            <person name="Liesegang H."/>
            <person name="Gottschalk G."/>
            <person name="Schleper C."/>
            <person name="Schepers B."/>
            <person name="Dock C."/>
            <person name="Antranikian G."/>
            <person name="Liebl W."/>
        </authorList>
    </citation>
    <scope>NUCLEOTIDE SEQUENCE [LARGE SCALE GENOMIC DNA]</scope>
    <source>
        <strain>ATCC 700027 / DSM 9790 / JCM 10055 / NBRC 100828 / KAW 2/3</strain>
    </source>
</reference>
<protein>
    <recommendedName>
        <fullName evidence="1">Small ribosomal subunit protein eS4</fullName>
    </recommendedName>
    <alternativeName>
        <fullName>30S ribosomal protein S4e</fullName>
    </alternativeName>
</protein>
<gene>
    <name type="primary">rps4e</name>
    <name type="ordered locus">PTO0652</name>
</gene>
<keyword id="KW-0687">Ribonucleoprotein</keyword>
<keyword id="KW-0689">Ribosomal protein</keyword>
<keyword id="KW-0694">RNA-binding</keyword>
<keyword id="KW-0699">rRNA-binding</keyword>
<feature type="chain" id="PRO_0000130856" description="Small ribosomal subunit protein eS4">
    <location>
        <begin position="1"/>
        <end position="234"/>
    </location>
</feature>
<feature type="domain" description="S4 RNA-binding; degenerate">
    <location>
        <begin position="38"/>
        <end position="99"/>
    </location>
</feature>
<proteinExistence type="inferred from homology"/>
<name>RS4E_PICTO</name>